<organism>
    <name type="scientific">Hordeum vulgare</name>
    <name type="common">Barley</name>
    <dbReference type="NCBI Taxonomy" id="4513"/>
    <lineage>
        <taxon>Eukaryota</taxon>
        <taxon>Viridiplantae</taxon>
        <taxon>Streptophyta</taxon>
        <taxon>Embryophyta</taxon>
        <taxon>Tracheophyta</taxon>
        <taxon>Spermatophyta</taxon>
        <taxon>Magnoliopsida</taxon>
        <taxon>Liliopsida</taxon>
        <taxon>Poales</taxon>
        <taxon>Poaceae</taxon>
        <taxon>BOP clade</taxon>
        <taxon>Pooideae</taxon>
        <taxon>Triticodae</taxon>
        <taxon>Triticeae</taxon>
        <taxon>Hordeinae</taxon>
        <taxon>Hordeum</taxon>
    </lineage>
</organism>
<dbReference type="EC" id="3.6.5.4" evidence="3"/>
<dbReference type="EMBL" id="L48285">
    <property type="protein sequence ID" value="AAA79355.1"/>
    <property type="molecule type" value="mRNA"/>
</dbReference>
<dbReference type="PIR" id="T06186">
    <property type="entry name" value="T06186"/>
</dbReference>
<dbReference type="SMR" id="P49969"/>
<dbReference type="ExpressionAtlas" id="P49969">
    <property type="expression patterns" value="baseline and differential"/>
</dbReference>
<dbReference type="GO" id="GO:0005829">
    <property type="term" value="C:cytosol"/>
    <property type="evidence" value="ECO:0007669"/>
    <property type="project" value="TreeGrafter"/>
</dbReference>
<dbReference type="GO" id="GO:0005783">
    <property type="term" value="C:endoplasmic reticulum"/>
    <property type="evidence" value="ECO:0007669"/>
    <property type="project" value="UniProtKB-SubCell"/>
</dbReference>
<dbReference type="GO" id="GO:0005786">
    <property type="term" value="C:signal recognition particle, endoplasmic reticulum targeting"/>
    <property type="evidence" value="ECO:0007669"/>
    <property type="project" value="UniProtKB-KW"/>
</dbReference>
<dbReference type="GO" id="GO:0008312">
    <property type="term" value="F:7S RNA binding"/>
    <property type="evidence" value="ECO:0007669"/>
    <property type="project" value="InterPro"/>
</dbReference>
<dbReference type="GO" id="GO:0016887">
    <property type="term" value="F:ATP hydrolysis activity"/>
    <property type="evidence" value="ECO:0007669"/>
    <property type="project" value="InterPro"/>
</dbReference>
<dbReference type="GO" id="GO:0030942">
    <property type="term" value="F:endoplasmic reticulum signal peptide binding"/>
    <property type="evidence" value="ECO:0007669"/>
    <property type="project" value="TreeGrafter"/>
</dbReference>
<dbReference type="GO" id="GO:0005525">
    <property type="term" value="F:GTP binding"/>
    <property type="evidence" value="ECO:0007669"/>
    <property type="project" value="UniProtKB-KW"/>
</dbReference>
<dbReference type="GO" id="GO:0003924">
    <property type="term" value="F:GTPase activity"/>
    <property type="evidence" value="ECO:0007669"/>
    <property type="project" value="InterPro"/>
</dbReference>
<dbReference type="GO" id="GO:0006616">
    <property type="term" value="P:SRP-dependent cotranslational protein targeting to membrane, translocation"/>
    <property type="evidence" value="ECO:0007669"/>
    <property type="project" value="TreeGrafter"/>
</dbReference>
<dbReference type="CDD" id="cd17875">
    <property type="entry name" value="SRP54_G"/>
    <property type="match status" value="1"/>
</dbReference>
<dbReference type="FunFam" id="1.10.260.30:FF:000004">
    <property type="entry name" value="Signal recognition particle 54 kDa protein"/>
    <property type="match status" value="1"/>
</dbReference>
<dbReference type="FunFam" id="3.40.50.300:FF:000022">
    <property type="entry name" value="Signal recognition particle 54 kDa subunit"/>
    <property type="match status" value="1"/>
</dbReference>
<dbReference type="FunFam" id="1.20.120.140:FF:000001">
    <property type="entry name" value="Signal recognition particle GTPase"/>
    <property type="match status" value="1"/>
</dbReference>
<dbReference type="Gene3D" id="3.40.50.300">
    <property type="entry name" value="P-loop containing nucleotide triphosphate hydrolases"/>
    <property type="match status" value="1"/>
</dbReference>
<dbReference type="Gene3D" id="1.20.120.140">
    <property type="entry name" value="Signal recognition particle SRP54, nucleotide-binding domain"/>
    <property type="match status" value="1"/>
</dbReference>
<dbReference type="Gene3D" id="1.10.260.30">
    <property type="entry name" value="Signal recognition particle, SRP54 subunit, M-domain"/>
    <property type="match status" value="1"/>
</dbReference>
<dbReference type="HAMAP" id="MF_00306">
    <property type="entry name" value="SRP54"/>
    <property type="match status" value="1"/>
</dbReference>
<dbReference type="InterPro" id="IPR003593">
    <property type="entry name" value="AAA+_ATPase"/>
</dbReference>
<dbReference type="InterPro" id="IPR027417">
    <property type="entry name" value="P-loop_NTPase"/>
</dbReference>
<dbReference type="InterPro" id="IPR036891">
    <property type="entry name" value="Signal_recog_part_SRP54_M_sf"/>
</dbReference>
<dbReference type="InterPro" id="IPR013822">
    <property type="entry name" value="Signal_recog_particl_SRP54_hlx"/>
</dbReference>
<dbReference type="InterPro" id="IPR004125">
    <property type="entry name" value="Signal_recog_particle_SRP54_M"/>
</dbReference>
<dbReference type="InterPro" id="IPR036225">
    <property type="entry name" value="SRP/SRP_N"/>
</dbReference>
<dbReference type="InterPro" id="IPR022941">
    <property type="entry name" value="SRP54"/>
</dbReference>
<dbReference type="InterPro" id="IPR006325">
    <property type="entry name" value="SRP54_euk"/>
</dbReference>
<dbReference type="InterPro" id="IPR000897">
    <property type="entry name" value="SRP54_GTPase_dom"/>
</dbReference>
<dbReference type="InterPro" id="IPR042101">
    <property type="entry name" value="SRP54_N_sf"/>
</dbReference>
<dbReference type="NCBIfam" id="TIGR01425">
    <property type="entry name" value="SRP54_euk"/>
    <property type="match status" value="1"/>
</dbReference>
<dbReference type="PANTHER" id="PTHR11564">
    <property type="entry name" value="SIGNAL RECOGNITION PARTICLE 54K PROTEIN SRP54"/>
    <property type="match status" value="1"/>
</dbReference>
<dbReference type="PANTHER" id="PTHR11564:SF5">
    <property type="entry name" value="SIGNAL RECOGNITION PARTICLE SUBUNIT SRP54"/>
    <property type="match status" value="1"/>
</dbReference>
<dbReference type="Pfam" id="PF00448">
    <property type="entry name" value="SRP54"/>
    <property type="match status" value="1"/>
</dbReference>
<dbReference type="Pfam" id="PF02881">
    <property type="entry name" value="SRP54_N"/>
    <property type="match status" value="1"/>
</dbReference>
<dbReference type="Pfam" id="PF02978">
    <property type="entry name" value="SRP_SPB"/>
    <property type="match status" value="1"/>
</dbReference>
<dbReference type="SMART" id="SM00382">
    <property type="entry name" value="AAA"/>
    <property type="match status" value="1"/>
</dbReference>
<dbReference type="SMART" id="SM00962">
    <property type="entry name" value="SRP54"/>
    <property type="match status" value="1"/>
</dbReference>
<dbReference type="SMART" id="SM00963">
    <property type="entry name" value="SRP54_N"/>
    <property type="match status" value="1"/>
</dbReference>
<dbReference type="SUPFAM" id="SSF47364">
    <property type="entry name" value="Domain of the SRP/SRP receptor G-proteins"/>
    <property type="match status" value="1"/>
</dbReference>
<dbReference type="SUPFAM" id="SSF52540">
    <property type="entry name" value="P-loop containing nucleoside triphosphate hydrolases"/>
    <property type="match status" value="1"/>
</dbReference>
<dbReference type="SUPFAM" id="SSF47446">
    <property type="entry name" value="Signal peptide-binding domain"/>
    <property type="match status" value="1"/>
</dbReference>
<dbReference type="PROSITE" id="PS00300">
    <property type="entry name" value="SRP54"/>
    <property type="match status" value="1"/>
</dbReference>
<reference key="1">
    <citation type="submission" date="1995-10" db="EMBL/GenBank/DDBJ databases">
        <authorList>
            <person name="Chu B."/>
            <person name="Brodl M.R."/>
            <person name="Belanger F.C."/>
        </authorList>
    </citation>
    <scope>NUCLEOTIDE SEQUENCE [MRNA]</scope>
    <source>
        <tissue>Root</tissue>
        <tissue>Shoot</tissue>
    </source>
</reference>
<keyword id="KW-0963">Cytoplasm</keyword>
<keyword id="KW-0256">Endoplasmic reticulum</keyword>
<keyword id="KW-0342">GTP-binding</keyword>
<keyword id="KW-0378">Hydrolase</keyword>
<keyword id="KW-0547">Nucleotide-binding</keyword>
<keyword id="KW-0687">Ribonucleoprotein</keyword>
<keyword id="KW-0694">RNA-binding</keyword>
<keyword id="KW-0733">Signal recognition particle</keyword>
<feature type="chain" id="PRO_0000101208" description="Signal recognition particle subunit SRP54 2">
    <location>
        <begin position="1"/>
        <end position="497"/>
    </location>
</feature>
<feature type="region of interest" description="G-domain">
    <location>
        <begin position="1"/>
        <end position="295"/>
    </location>
</feature>
<feature type="region of interest" description="M-domain">
    <location>
        <begin position="296"/>
        <end position="497"/>
    </location>
</feature>
<feature type="binding site" evidence="1">
    <location>
        <begin position="108"/>
        <end position="115"/>
    </location>
    <ligand>
        <name>GTP</name>
        <dbReference type="ChEBI" id="CHEBI:37565"/>
    </ligand>
</feature>
<feature type="binding site" evidence="1">
    <location>
        <begin position="190"/>
        <end position="194"/>
    </location>
    <ligand>
        <name>GTP</name>
        <dbReference type="ChEBI" id="CHEBI:37565"/>
    </ligand>
</feature>
<feature type="binding site" evidence="1">
    <location>
        <begin position="248"/>
        <end position="251"/>
    </location>
    <ligand>
        <name>GTP</name>
        <dbReference type="ChEBI" id="CHEBI:37565"/>
    </ligand>
</feature>
<name>SR542_HORVU</name>
<evidence type="ECO:0000250" key="1"/>
<evidence type="ECO:0000250" key="2">
    <source>
        <dbReference type="UniProtKB" id="P61010"/>
    </source>
</evidence>
<evidence type="ECO:0000250" key="3">
    <source>
        <dbReference type="UniProtKB" id="P61011"/>
    </source>
</evidence>
<evidence type="ECO:0000305" key="4"/>
<sequence length="497" mass="54508">MVLAQLGGSISRALAQMSNATVIDEKVLGECLNEISRALLQSDVQFKMVRDMQTNIRKIVNLETLAAGTNKRRIIQQAVFTELCNMLDPGKPAFTPKKGKPSVVMFVGLQGSGKTTTCTKYAYYHQRKGFKPSLVCADTFRAGAFDQLKQNATKAKIPFYGSYMESDPVKIAVEGLERFRKENSDLIIIDTSGRHKQEAALFEEMRQVAEATKPDLVIFVMDGSIGQAAFDQAQAFKQSASVGAVIITKLDGHAKGGGALSAVAATKSPVIFIGTGEHIDEFEIFDVKPFVSRLLGMGDLSGLMDKIQDVMPADQQPELLAKLAEGTFTLRLLYEQFQNLLKMGPIGQVFSMLPGFSSELMPKGHEKEGQAKIKRYMTIMDSMTAAELDSTNPKLMTESRIIRIARGSGRQIRDVTDMLEEYKRLAKMWSKMKGLKMPKNGKMSDLSQNLNIQQMTKALPPQVLKQMGGMGGLQALMKQMGGKDMSKMLGGMGLGGD</sequence>
<gene>
    <name type="primary">SRP54-2</name>
</gene>
<proteinExistence type="evidence at transcript level"/>
<accession>P49969</accession>
<comment type="function">
    <text evidence="2 3">Component of the signal recognition particle (SRP) complex, a ribonucleoprotein complex that mediates the cotranslational targeting of secretory and membrane proteins to the endoplasmic reticulum (ER). As part of the SRP complex, associates with the SRP receptor (SR) component SRPRA to target secretory proteins to the endoplasmic reticulum membrane. Binds to the signal sequence of presecretory proteins when they emerge from the ribosomes. Displays basal GTPase activity, and stimulates reciprocal GTPase activation of the SR subunit SRPRA. Forms a guanosine 5'-triphosphate (GTP)-dependent complex with the SR subunit SRPRA. SR compaction and GTPase mediated rearrangement of SR drive SRP-mediated cotranslational protein translocation into the ER (By similarity). Requires the presence of SRP9/SRP14 and/or SRP19 to stably interact with RNA (By similarity).</text>
</comment>
<comment type="catalytic activity">
    <reaction evidence="3">
        <text>GTP + H2O = GDP + phosphate + H(+)</text>
        <dbReference type="Rhea" id="RHEA:19669"/>
        <dbReference type="ChEBI" id="CHEBI:15377"/>
        <dbReference type="ChEBI" id="CHEBI:15378"/>
        <dbReference type="ChEBI" id="CHEBI:37565"/>
        <dbReference type="ChEBI" id="CHEBI:43474"/>
        <dbReference type="ChEBI" id="CHEBI:58189"/>
        <dbReference type="EC" id="3.6.5.4"/>
    </reaction>
    <physiologicalReaction direction="left-to-right" evidence="3">
        <dbReference type="Rhea" id="RHEA:19670"/>
    </physiologicalReaction>
</comment>
<comment type="subunit">
    <text evidence="3">Component of a signal recognition particle (SRP) complex that consists of a 7SL RNA molecule of 300 nucleotides and six protein subunits: SRP72, SRP68, SRP54, SRP19, SRP14 and SRP9.</text>
</comment>
<comment type="subcellular location">
    <subcellularLocation>
        <location evidence="3">Cytoplasm</location>
    </subcellularLocation>
    <subcellularLocation>
        <location evidence="3">Endoplasmic reticulum</location>
    </subcellularLocation>
</comment>
<comment type="domain">
    <text evidence="3">The NG domain, also named G domain, is a special guanosine triphosphatase (GTPase) domain, which binds GTP and forms a guanosine 5'-triphosphate (GTP)-dependent complex with a homologous NG domain in the SRP receptor subunit SRPRA. The two NG domains undergo cooperative rearrangements upon their assembly, which culminate in the reciprocal activation of the GTPase activity of one another. SRP receptor compaction upon binding with cargo-loaded SRP and GTPase rearrangement drive SRP-mediated cotranslational protein translocation into the ER.</text>
</comment>
<comment type="domain">
    <text evidence="3">The M domain binds the 7SL RNA in presence of SRP19 and binds the signal sequence of presecretory proteins.</text>
</comment>
<comment type="similarity">
    <text evidence="4">Belongs to the GTP-binding SRP family. SRP54 subfamily.</text>
</comment>
<protein>
    <recommendedName>
        <fullName>Signal recognition particle subunit SRP54 2</fullName>
        <ecNumber evidence="3">3.6.5.4</ecNumber>
    </recommendedName>
    <alternativeName>
        <fullName>Signal recognition particle 54 kDa protein 2</fullName>
        <shortName>SRP54</shortName>
    </alternativeName>
</protein>